<reference key="1">
    <citation type="journal article" date="2003" name="Science">
        <title>Role of mobile DNA in the evolution of vancomycin-resistant Enterococcus faecalis.</title>
        <authorList>
            <person name="Paulsen I.T."/>
            <person name="Banerjei L."/>
            <person name="Myers G.S.A."/>
            <person name="Nelson K.E."/>
            <person name="Seshadri R."/>
            <person name="Read T.D."/>
            <person name="Fouts D.E."/>
            <person name="Eisen J.A."/>
            <person name="Gill S.R."/>
            <person name="Heidelberg J.F."/>
            <person name="Tettelin H."/>
            <person name="Dodson R.J."/>
            <person name="Umayam L.A."/>
            <person name="Brinkac L.M."/>
            <person name="Beanan M.J."/>
            <person name="Daugherty S.C."/>
            <person name="DeBoy R.T."/>
            <person name="Durkin S.A."/>
            <person name="Kolonay J.F."/>
            <person name="Madupu R."/>
            <person name="Nelson W.C."/>
            <person name="Vamathevan J.J."/>
            <person name="Tran B."/>
            <person name="Upton J."/>
            <person name="Hansen T."/>
            <person name="Shetty J."/>
            <person name="Khouri H.M."/>
            <person name="Utterback T.R."/>
            <person name="Radune D."/>
            <person name="Ketchum K.A."/>
            <person name="Dougherty B.A."/>
            <person name="Fraser C.M."/>
        </authorList>
    </citation>
    <scope>NUCLEOTIDE SEQUENCE [LARGE SCALE GENOMIC DNA]</scope>
    <source>
        <strain>ATCC 700802 / V583</strain>
    </source>
</reference>
<reference key="2">
    <citation type="journal article" date="1992" name="J. Bacteriol.">
        <title>Degenerate oligonucleotide primers for enzymatic amplification of recA sequences from Gram-positive bacteria and mycoplasmas.</title>
        <authorList>
            <person name="Dybvig K."/>
            <person name="Hollingshead S.K."/>
            <person name="Heath D.G."/>
            <person name="Clewell D.B."/>
            <person name="Sun F."/>
            <person name="Woodard A."/>
        </authorList>
    </citation>
    <scope>NUCLEOTIDE SEQUENCE [GENOMIC DNA] OF 91-192</scope>
</reference>
<dbReference type="EMBL" id="AE016830">
    <property type="protein sequence ID" value="AAO82845.1"/>
    <property type="molecule type" value="Genomic_DNA"/>
</dbReference>
<dbReference type="EMBL" id="M81466">
    <property type="protein sequence ID" value="AAA24782.1"/>
    <property type="molecule type" value="Genomic_DNA"/>
</dbReference>
<dbReference type="PIR" id="C41846">
    <property type="entry name" value="C41846"/>
</dbReference>
<dbReference type="RefSeq" id="NP_816775.1">
    <property type="nucleotide sequence ID" value="NC_004668.1"/>
</dbReference>
<dbReference type="RefSeq" id="WP_002354860.1">
    <property type="nucleotide sequence ID" value="NZ_KE136524.1"/>
</dbReference>
<dbReference type="SMR" id="P42444"/>
<dbReference type="STRING" id="226185.EF_3171"/>
<dbReference type="EnsemblBacteria" id="AAO82845">
    <property type="protein sequence ID" value="AAO82845"/>
    <property type="gene ID" value="EF_3171"/>
</dbReference>
<dbReference type="GeneID" id="60892411"/>
<dbReference type="KEGG" id="efa:EF3171"/>
<dbReference type="PATRIC" id="fig|226185.45.peg.406"/>
<dbReference type="eggNOG" id="COG0468">
    <property type="taxonomic scope" value="Bacteria"/>
</dbReference>
<dbReference type="HOGENOM" id="CLU_040469_1_2_9"/>
<dbReference type="Proteomes" id="UP000001415">
    <property type="component" value="Chromosome"/>
</dbReference>
<dbReference type="GO" id="GO:0005829">
    <property type="term" value="C:cytosol"/>
    <property type="evidence" value="ECO:0007669"/>
    <property type="project" value="TreeGrafter"/>
</dbReference>
<dbReference type="GO" id="GO:0005524">
    <property type="term" value="F:ATP binding"/>
    <property type="evidence" value="ECO:0007669"/>
    <property type="project" value="UniProtKB-UniRule"/>
</dbReference>
<dbReference type="GO" id="GO:0016887">
    <property type="term" value="F:ATP hydrolysis activity"/>
    <property type="evidence" value="ECO:0007669"/>
    <property type="project" value="InterPro"/>
</dbReference>
<dbReference type="GO" id="GO:0140664">
    <property type="term" value="F:ATP-dependent DNA damage sensor activity"/>
    <property type="evidence" value="ECO:0007669"/>
    <property type="project" value="InterPro"/>
</dbReference>
<dbReference type="GO" id="GO:0003684">
    <property type="term" value="F:damaged DNA binding"/>
    <property type="evidence" value="ECO:0007669"/>
    <property type="project" value="UniProtKB-UniRule"/>
</dbReference>
<dbReference type="GO" id="GO:0003697">
    <property type="term" value="F:single-stranded DNA binding"/>
    <property type="evidence" value="ECO:0007669"/>
    <property type="project" value="UniProtKB-UniRule"/>
</dbReference>
<dbReference type="GO" id="GO:0006310">
    <property type="term" value="P:DNA recombination"/>
    <property type="evidence" value="ECO:0007669"/>
    <property type="project" value="UniProtKB-UniRule"/>
</dbReference>
<dbReference type="GO" id="GO:0006281">
    <property type="term" value="P:DNA repair"/>
    <property type="evidence" value="ECO:0007669"/>
    <property type="project" value="UniProtKB-UniRule"/>
</dbReference>
<dbReference type="GO" id="GO:0009432">
    <property type="term" value="P:SOS response"/>
    <property type="evidence" value="ECO:0007669"/>
    <property type="project" value="UniProtKB-UniRule"/>
</dbReference>
<dbReference type="CDD" id="cd00983">
    <property type="entry name" value="RecA"/>
    <property type="match status" value="1"/>
</dbReference>
<dbReference type="FunFam" id="3.40.50.300:FF:000087">
    <property type="entry name" value="Recombinase RecA"/>
    <property type="match status" value="1"/>
</dbReference>
<dbReference type="Gene3D" id="3.40.50.300">
    <property type="entry name" value="P-loop containing nucleotide triphosphate hydrolases"/>
    <property type="match status" value="1"/>
</dbReference>
<dbReference type="HAMAP" id="MF_00268">
    <property type="entry name" value="RecA"/>
    <property type="match status" value="1"/>
</dbReference>
<dbReference type="InterPro" id="IPR003593">
    <property type="entry name" value="AAA+_ATPase"/>
</dbReference>
<dbReference type="InterPro" id="IPR013765">
    <property type="entry name" value="DNA_recomb/repair_RecA"/>
</dbReference>
<dbReference type="InterPro" id="IPR020584">
    <property type="entry name" value="DNA_recomb/repair_RecA_CS"/>
</dbReference>
<dbReference type="InterPro" id="IPR027417">
    <property type="entry name" value="P-loop_NTPase"/>
</dbReference>
<dbReference type="InterPro" id="IPR049261">
    <property type="entry name" value="RecA-like_C"/>
</dbReference>
<dbReference type="InterPro" id="IPR049428">
    <property type="entry name" value="RecA-like_N"/>
</dbReference>
<dbReference type="InterPro" id="IPR020588">
    <property type="entry name" value="RecA_ATP-bd"/>
</dbReference>
<dbReference type="InterPro" id="IPR023400">
    <property type="entry name" value="RecA_C_sf"/>
</dbReference>
<dbReference type="InterPro" id="IPR020587">
    <property type="entry name" value="RecA_monomer-monomer_interface"/>
</dbReference>
<dbReference type="NCBIfam" id="TIGR02012">
    <property type="entry name" value="tigrfam_recA"/>
    <property type="match status" value="1"/>
</dbReference>
<dbReference type="PANTHER" id="PTHR45900:SF1">
    <property type="entry name" value="MITOCHONDRIAL DNA REPAIR PROTEIN RECA HOMOLOG-RELATED"/>
    <property type="match status" value="1"/>
</dbReference>
<dbReference type="PANTHER" id="PTHR45900">
    <property type="entry name" value="RECA"/>
    <property type="match status" value="1"/>
</dbReference>
<dbReference type="Pfam" id="PF00154">
    <property type="entry name" value="RecA"/>
    <property type="match status" value="1"/>
</dbReference>
<dbReference type="Pfam" id="PF21096">
    <property type="entry name" value="RecA_C"/>
    <property type="match status" value="1"/>
</dbReference>
<dbReference type="PRINTS" id="PR00142">
    <property type="entry name" value="RECA"/>
</dbReference>
<dbReference type="SMART" id="SM00382">
    <property type="entry name" value="AAA"/>
    <property type="match status" value="1"/>
</dbReference>
<dbReference type="SUPFAM" id="SSF52540">
    <property type="entry name" value="P-loop containing nucleoside triphosphate hydrolases"/>
    <property type="match status" value="1"/>
</dbReference>
<dbReference type="SUPFAM" id="SSF54752">
    <property type="entry name" value="RecA protein, C-terminal domain"/>
    <property type="match status" value="1"/>
</dbReference>
<dbReference type="PROSITE" id="PS00321">
    <property type="entry name" value="RECA_1"/>
    <property type="match status" value="1"/>
</dbReference>
<dbReference type="PROSITE" id="PS50162">
    <property type="entry name" value="RECA_2"/>
    <property type="match status" value="1"/>
</dbReference>
<dbReference type="PROSITE" id="PS50163">
    <property type="entry name" value="RECA_3"/>
    <property type="match status" value="1"/>
</dbReference>
<comment type="function">
    <text evidence="1">Can catalyze the hydrolysis of ATP in the presence of single-stranded DNA, the ATP-dependent uptake of single-stranded DNA by duplex DNA, and the ATP-dependent hybridization of homologous single-stranded DNAs. It interacts with LexA causing its activation and leading to its autocatalytic cleavage.</text>
</comment>
<comment type="subcellular location">
    <subcellularLocation>
        <location evidence="1">Cytoplasm</location>
    </subcellularLocation>
</comment>
<comment type="similarity">
    <text evidence="1">Belongs to the RecA family.</text>
</comment>
<organism>
    <name type="scientific">Enterococcus faecalis (strain ATCC 700802 / V583)</name>
    <dbReference type="NCBI Taxonomy" id="226185"/>
    <lineage>
        <taxon>Bacteria</taxon>
        <taxon>Bacillati</taxon>
        <taxon>Bacillota</taxon>
        <taxon>Bacilli</taxon>
        <taxon>Lactobacillales</taxon>
        <taxon>Enterococcaceae</taxon>
        <taxon>Enterococcus</taxon>
    </lineage>
</organism>
<proteinExistence type="inferred from homology"/>
<feature type="chain" id="PRO_0000122709" description="Protein RecA">
    <location>
        <begin position="1"/>
        <end position="348"/>
    </location>
</feature>
<feature type="binding site" evidence="1">
    <location>
        <begin position="65"/>
        <end position="72"/>
    </location>
    <ligand>
        <name>ATP</name>
        <dbReference type="ChEBI" id="CHEBI:30616"/>
    </ligand>
</feature>
<protein>
    <recommendedName>
        <fullName evidence="1">Protein RecA</fullName>
    </recommendedName>
    <alternativeName>
        <fullName evidence="1">Recombinase A</fullName>
    </alternativeName>
</protein>
<accession>P42444</accession>
<name>RECA_ENTFA</name>
<sequence length="348" mass="37410">MADDRKVALDAALKKIEKNFGKGSIMKLGEKADQKISTIPSGSLALDVALGVGGYPRGRIIEVYGPESSGKTTVSLHAIAEVQRNGGTAAFIDAEHALDPQYAEKLGVNIDELLLSQPDTGEQGLEIADALVSSGAIDIVVIDSVAALVPRAEIDGEMGASHVGLQARLMSQALRKLSGSINKTKTIAIFINQIREKVGVMFGNPETTPGGRALKFYATVRLEVRRAEQLKQGTDIVGNRTKIKVVKNKVAPPFKVAEVDIMYGQGISQEGELLDMAVEKDLISKSGAWYGYKEERIGQGRENAKQYMADHPEMMAEVSKLVRDAYGIGDGSTITEEAEGQEELPLDE</sequence>
<keyword id="KW-0067">ATP-binding</keyword>
<keyword id="KW-0963">Cytoplasm</keyword>
<keyword id="KW-0227">DNA damage</keyword>
<keyword id="KW-0233">DNA recombination</keyword>
<keyword id="KW-0234">DNA repair</keyword>
<keyword id="KW-0238">DNA-binding</keyword>
<keyword id="KW-0547">Nucleotide-binding</keyword>
<keyword id="KW-1185">Reference proteome</keyword>
<keyword id="KW-0742">SOS response</keyword>
<evidence type="ECO:0000255" key="1">
    <source>
        <dbReference type="HAMAP-Rule" id="MF_00268"/>
    </source>
</evidence>
<gene>
    <name evidence="1" type="primary">recA</name>
    <name type="ordered locus">EF_3171</name>
</gene>